<protein>
    <recommendedName>
        <fullName evidence="1">Small ribosomal subunit protein uS19</fullName>
    </recommendedName>
    <alternativeName>
        <fullName evidence="2">30S ribosomal protein S19</fullName>
    </alternativeName>
</protein>
<organism>
    <name type="scientific">Picrophilus torridus (strain ATCC 700027 / DSM 9790 / JCM 10055 / NBRC 100828 / KAW 2/3)</name>
    <dbReference type="NCBI Taxonomy" id="1122961"/>
    <lineage>
        <taxon>Archaea</taxon>
        <taxon>Methanobacteriati</taxon>
        <taxon>Thermoplasmatota</taxon>
        <taxon>Thermoplasmata</taxon>
        <taxon>Thermoplasmatales</taxon>
        <taxon>Picrophilaceae</taxon>
        <taxon>Picrophilus</taxon>
    </lineage>
</organism>
<evidence type="ECO:0000255" key="1">
    <source>
        <dbReference type="HAMAP-Rule" id="MF_00531"/>
    </source>
</evidence>
<evidence type="ECO:0000305" key="2"/>
<accession>Q6L1C3</accession>
<name>RS19_PICTO</name>
<comment type="function">
    <text evidence="1">Protein S19 forms a complex with S13 that binds strongly to the 16S ribosomal RNA.</text>
</comment>
<comment type="similarity">
    <text evidence="1">Belongs to the universal ribosomal protein uS19 family.</text>
</comment>
<reference key="1">
    <citation type="journal article" date="2004" name="Proc. Natl. Acad. Sci. U.S.A.">
        <title>Genome sequence of Picrophilus torridus and its implications for life around pH 0.</title>
        <authorList>
            <person name="Fuetterer O."/>
            <person name="Angelov A."/>
            <person name="Liesegang H."/>
            <person name="Gottschalk G."/>
            <person name="Schleper C."/>
            <person name="Schepers B."/>
            <person name="Dock C."/>
            <person name="Antranikian G."/>
            <person name="Liebl W."/>
        </authorList>
    </citation>
    <scope>NUCLEOTIDE SEQUENCE [LARGE SCALE GENOMIC DNA]</scope>
    <source>
        <strain>ATCC 700027 / DSM 9790 / JCM 10055 / NBRC 100828 / KAW 2/3</strain>
    </source>
</reference>
<proteinExistence type="inferred from homology"/>
<gene>
    <name evidence="1" type="primary">rps19</name>
    <name type="ordered locus">PTO0644</name>
</gene>
<sequence length="151" mass="17407">MVAKRQVSVKSIKRKARKAQKAITGRAKEFSYRGHSLEELQNMELNELLPLLPARARRSYSRQMNHEQEKLYEKLLGDKENIKTHVRDLIVLPQFVGKTIELYNGNSYIKFEIKPEMIGHYLGEFALTRKEVKHSGPGVGATRSSKFLPLK</sequence>
<dbReference type="EMBL" id="AE017261">
    <property type="protein sequence ID" value="AAT43229.1"/>
    <property type="molecule type" value="Genomic_DNA"/>
</dbReference>
<dbReference type="RefSeq" id="WP_011177445.1">
    <property type="nucleotide sequence ID" value="NC_005877.1"/>
</dbReference>
<dbReference type="SMR" id="Q6L1C3"/>
<dbReference type="FunCoup" id="Q6L1C3">
    <property type="interactions" value="155"/>
</dbReference>
<dbReference type="STRING" id="263820.PTO0644"/>
<dbReference type="PaxDb" id="263820-PTO0644"/>
<dbReference type="GeneID" id="2844611"/>
<dbReference type="KEGG" id="pto:PTO0644"/>
<dbReference type="PATRIC" id="fig|263820.9.peg.676"/>
<dbReference type="eggNOG" id="arCOG04099">
    <property type="taxonomic scope" value="Archaea"/>
</dbReference>
<dbReference type="HOGENOM" id="CLU_097347_1_0_2"/>
<dbReference type="InParanoid" id="Q6L1C3"/>
<dbReference type="OrthoDB" id="30559at2157"/>
<dbReference type="Proteomes" id="UP000000438">
    <property type="component" value="Chromosome"/>
</dbReference>
<dbReference type="GO" id="GO:0022627">
    <property type="term" value="C:cytosolic small ribosomal subunit"/>
    <property type="evidence" value="ECO:0007669"/>
    <property type="project" value="TreeGrafter"/>
</dbReference>
<dbReference type="GO" id="GO:0019843">
    <property type="term" value="F:rRNA binding"/>
    <property type="evidence" value="ECO:0007669"/>
    <property type="project" value="UniProtKB-UniRule"/>
</dbReference>
<dbReference type="GO" id="GO:0003735">
    <property type="term" value="F:structural constituent of ribosome"/>
    <property type="evidence" value="ECO:0007669"/>
    <property type="project" value="InterPro"/>
</dbReference>
<dbReference type="GO" id="GO:0000028">
    <property type="term" value="P:ribosomal small subunit assembly"/>
    <property type="evidence" value="ECO:0007669"/>
    <property type="project" value="TreeGrafter"/>
</dbReference>
<dbReference type="GO" id="GO:0006412">
    <property type="term" value="P:translation"/>
    <property type="evidence" value="ECO:0007669"/>
    <property type="project" value="UniProtKB-UniRule"/>
</dbReference>
<dbReference type="FunFam" id="3.30.860.10:FF:000002">
    <property type="entry name" value="40S ribosomal protein S15"/>
    <property type="match status" value="1"/>
</dbReference>
<dbReference type="Gene3D" id="3.30.860.10">
    <property type="entry name" value="30s Ribosomal Protein S19, Chain A"/>
    <property type="match status" value="1"/>
</dbReference>
<dbReference type="HAMAP" id="MF_00531">
    <property type="entry name" value="Ribosomal_uS19"/>
    <property type="match status" value="1"/>
</dbReference>
<dbReference type="InterPro" id="IPR002222">
    <property type="entry name" value="Ribosomal_uS19"/>
</dbReference>
<dbReference type="InterPro" id="IPR020934">
    <property type="entry name" value="Ribosomal_uS19_CS"/>
</dbReference>
<dbReference type="InterPro" id="IPR005713">
    <property type="entry name" value="Ribosomal_uS19_euk/arc"/>
</dbReference>
<dbReference type="InterPro" id="IPR023575">
    <property type="entry name" value="Ribosomal_uS19_SF"/>
</dbReference>
<dbReference type="NCBIfam" id="NF003121">
    <property type="entry name" value="PRK04038.1"/>
    <property type="match status" value="1"/>
</dbReference>
<dbReference type="NCBIfam" id="TIGR01025">
    <property type="entry name" value="uS19_arch"/>
    <property type="match status" value="1"/>
</dbReference>
<dbReference type="PANTHER" id="PTHR11880">
    <property type="entry name" value="RIBOSOMAL PROTEIN S19P FAMILY MEMBER"/>
    <property type="match status" value="1"/>
</dbReference>
<dbReference type="PANTHER" id="PTHR11880:SF2">
    <property type="entry name" value="SMALL RIBOSOMAL SUBUNIT PROTEIN US19"/>
    <property type="match status" value="1"/>
</dbReference>
<dbReference type="Pfam" id="PF00203">
    <property type="entry name" value="Ribosomal_S19"/>
    <property type="match status" value="1"/>
</dbReference>
<dbReference type="PIRSF" id="PIRSF002144">
    <property type="entry name" value="Ribosomal_S19"/>
    <property type="match status" value="1"/>
</dbReference>
<dbReference type="PRINTS" id="PR00975">
    <property type="entry name" value="RIBOSOMALS19"/>
</dbReference>
<dbReference type="SUPFAM" id="SSF54570">
    <property type="entry name" value="Ribosomal protein S19"/>
    <property type="match status" value="1"/>
</dbReference>
<dbReference type="PROSITE" id="PS00323">
    <property type="entry name" value="RIBOSOMAL_S19"/>
    <property type="match status" value="1"/>
</dbReference>
<keyword id="KW-0687">Ribonucleoprotein</keyword>
<keyword id="KW-0689">Ribosomal protein</keyword>
<keyword id="KW-0694">RNA-binding</keyword>
<keyword id="KW-0699">rRNA-binding</keyword>
<feature type="chain" id="PRO_0000130008" description="Small ribosomal subunit protein uS19">
    <location>
        <begin position="1"/>
        <end position="151"/>
    </location>
</feature>